<proteinExistence type="inferred from homology"/>
<name>ATPL_THEYD</name>
<accession>B5YGC8</accession>
<protein>
    <recommendedName>
        <fullName evidence="1">ATP synthase subunit c</fullName>
    </recommendedName>
    <alternativeName>
        <fullName evidence="1">ATP synthase F(0) sector subunit c</fullName>
    </alternativeName>
    <alternativeName>
        <fullName evidence="1">F-type ATPase subunit c</fullName>
        <shortName evidence="1">F-ATPase subunit c</shortName>
    </alternativeName>
    <alternativeName>
        <fullName evidence="1">Lipid-binding protein</fullName>
    </alternativeName>
</protein>
<dbReference type="EMBL" id="CP001147">
    <property type="protein sequence ID" value="ACI21802.1"/>
    <property type="molecule type" value="Genomic_DNA"/>
</dbReference>
<dbReference type="RefSeq" id="WP_012546507.1">
    <property type="nucleotide sequence ID" value="NC_011296.1"/>
</dbReference>
<dbReference type="RefSeq" id="YP_002249326.1">
    <property type="nucleotide sequence ID" value="NC_011296.1"/>
</dbReference>
<dbReference type="SMR" id="B5YGC8"/>
<dbReference type="STRING" id="289376.THEYE_A1529"/>
<dbReference type="EnsemblBacteria" id="ACI21802">
    <property type="protein sequence ID" value="ACI21802"/>
    <property type="gene ID" value="THEYE_A1529"/>
</dbReference>
<dbReference type="KEGG" id="tye:THEYE_A1529"/>
<dbReference type="PATRIC" id="fig|289376.4.peg.1488"/>
<dbReference type="eggNOG" id="COG0636">
    <property type="taxonomic scope" value="Bacteria"/>
</dbReference>
<dbReference type="HOGENOM" id="CLU_148047_0_1_0"/>
<dbReference type="InParanoid" id="B5YGC8"/>
<dbReference type="OrthoDB" id="5339943at2"/>
<dbReference type="Proteomes" id="UP000000718">
    <property type="component" value="Chromosome"/>
</dbReference>
<dbReference type="GO" id="GO:0005886">
    <property type="term" value="C:plasma membrane"/>
    <property type="evidence" value="ECO:0007669"/>
    <property type="project" value="UniProtKB-SubCell"/>
</dbReference>
<dbReference type="GO" id="GO:0045259">
    <property type="term" value="C:proton-transporting ATP synthase complex"/>
    <property type="evidence" value="ECO:0007669"/>
    <property type="project" value="UniProtKB-KW"/>
</dbReference>
<dbReference type="GO" id="GO:0033177">
    <property type="term" value="C:proton-transporting two-sector ATPase complex, proton-transporting domain"/>
    <property type="evidence" value="ECO:0007669"/>
    <property type="project" value="InterPro"/>
</dbReference>
<dbReference type="GO" id="GO:0008289">
    <property type="term" value="F:lipid binding"/>
    <property type="evidence" value="ECO:0007669"/>
    <property type="project" value="UniProtKB-KW"/>
</dbReference>
<dbReference type="GO" id="GO:0046933">
    <property type="term" value="F:proton-transporting ATP synthase activity, rotational mechanism"/>
    <property type="evidence" value="ECO:0007669"/>
    <property type="project" value="UniProtKB-UniRule"/>
</dbReference>
<dbReference type="GO" id="GO:0015986">
    <property type="term" value="P:proton motive force-driven ATP synthesis"/>
    <property type="evidence" value="ECO:0000318"/>
    <property type="project" value="GO_Central"/>
</dbReference>
<dbReference type="CDD" id="cd18121">
    <property type="entry name" value="ATP-synt_Fo_c"/>
    <property type="match status" value="1"/>
</dbReference>
<dbReference type="Gene3D" id="1.20.20.10">
    <property type="entry name" value="F1F0 ATP synthase subunit C"/>
    <property type="match status" value="1"/>
</dbReference>
<dbReference type="HAMAP" id="MF_01396">
    <property type="entry name" value="ATP_synth_c_bact"/>
    <property type="match status" value="1"/>
</dbReference>
<dbReference type="InterPro" id="IPR000454">
    <property type="entry name" value="ATP_synth_F0_csu"/>
</dbReference>
<dbReference type="InterPro" id="IPR020537">
    <property type="entry name" value="ATP_synth_F0_csu_DDCD_BS"/>
</dbReference>
<dbReference type="InterPro" id="IPR038662">
    <property type="entry name" value="ATP_synth_F0_csu_sf"/>
</dbReference>
<dbReference type="InterPro" id="IPR002379">
    <property type="entry name" value="ATPase_proteolipid_c-like_dom"/>
</dbReference>
<dbReference type="InterPro" id="IPR035921">
    <property type="entry name" value="F/V-ATP_Csub_sf"/>
</dbReference>
<dbReference type="Pfam" id="PF00137">
    <property type="entry name" value="ATP-synt_C"/>
    <property type="match status" value="1"/>
</dbReference>
<dbReference type="PRINTS" id="PR00124">
    <property type="entry name" value="ATPASEC"/>
</dbReference>
<dbReference type="SUPFAM" id="SSF81333">
    <property type="entry name" value="F1F0 ATP synthase subunit C"/>
    <property type="match status" value="1"/>
</dbReference>
<dbReference type="PROSITE" id="PS00605">
    <property type="entry name" value="ATPASE_C"/>
    <property type="match status" value="1"/>
</dbReference>
<feature type="chain" id="PRO_1000184521" description="ATP synthase subunit c">
    <location>
        <begin position="1"/>
        <end position="110"/>
    </location>
</feature>
<feature type="transmembrane region" description="Helical" evidence="1">
    <location>
        <begin position="4"/>
        <end position="24"/>
    </location>
</feature>
<feature type="transmembrane region" description="Helical" evidence="1">
    <location>
        <begin position="37"/>
        <end position="57"/>
    </location>
</feature>
<feature type="transmembrane region" description="Helical" evidence="1">
    <location>
        <begin position="81"/>
        <end position="101"/>
    </location>
</feature>
<feature type="site" description="Reversibly protonated during proton transport" evidence="1">
    <location>
        <position position="89"/>
    </location>
</feature>
<organism>
    <name type="scientific">Thermodesulfovibrio yellowstonii (strain ATCC 51303 / DSM 11347 / YP87)</name>
    <dbReference type="NCBI Taxonomy" id="289376"/>
    <lineage>
        <taxon>Bacteria</taxon>
        <taxon>Pseudomonadati</taxon>
        <taxon>Nitrospirota</taxon>
        <taxon>Thermodesulfovibrionia</taxon>
        <taxon>Thermodesulfovibrionales</taxon>
        <taxon>Thermodesulfovibrionaceae</taxon>
        <taxon>Thermodesulfovibrio</taxon>
    </lineage>
</organism>
<reference key="1">
    <citation type="submission" date="2008-08" db="EMBL/GenBank/DDBJ databases">
        <title>The complete genome sequence of Thermodesulfovibrio yellowstonii strain ATCC 51303 / DSM 11347 / YP87.</title>
        <authorList>
            <person name="Dodson R.J."/>
            <person name="Durkin A.S."/>
            <person name="Wu M."/>
            <person name="Eisen J."/>
            <person name="Sutton G."/>
        </authorList>
    </citation>
    <scope>NUCLEOTIDE SEQUENCE [LARGE SCALE GENOMIC DNA]</scope>
    <source>
        <strain>ATCC 51303 / DSM 11347 / YP87</strain>
    </source>
</reference>
<keyword id="KW-0066">ATP synthesis</keyword>
<keyword id="KW-0997">Cell inner membrane</keyword>
<keyword id="KW-1003">Cell membrane</keyword>
<keyword id="KW-0138">CF(0)</keyword>
<keyword id="KW-0375">Hydrogen ion transport</keyword>
<keyword id="KW-0406">Ion transport</keyword>
<keyword id="KW-0446">Lipid-binding</keyword>
<keyword id="KW-0472">Membrane</keyword>
<keyword id="KW-1185">Reference proteome</keyword>
<keyword id="KW-0812">Transmembrane</keyword>
<keyword id="KW-1133">Transmembrane helix</keyword>
<keyword id="KW-0813">Transport</keyword>
<comment type="function">
    <text evidence="1">F(1)F(0) ATP synthase produces ATP from ADP in the presence of a proton or sodium gradient. F-type ATPases consist of two structural domains, F(1) containing the extramembraneous catalytic core and F(0) containing the membrane proton channel, linked together by a central stalk and a peripheral stalk. During catalysis, ATP synthesis in the catalytic domain of F(1) is coupled via a rotary mechanism of the central stalk subunits to proton translocation.</text>
</comment>
<comment type="function">
    <text evidence="1">Key component of the F(0) channel; it plays a direct role in translocation across the membrane. A homomeric c-ring of between 10-14 subunits forms the central stalk rotor element with the F(1) delta and epsilon subunits.</text>
</comment>
<comment type="subunit">
    <text evidence="1">F-type ATPases have 2 components, F(1) - the catalytic core - and F(0) - the membrane proton channel. F(1) has five subunits: alpha(3), beta(3), gamma(1), delta(1), epsilon(1). F(0) has three main subunits: a(1), b(2) and c(10-14). The alpha and beta chains form an alternating ring which encloses part of the gamma chain. F(1) is attached to F(0) by a central stalk formed by the gamma and epsilon chains, while a peripheral stalk is formed by the delta and b chains.</text>
</comment>
<comment type="subcellular location">
    <subcellularLocation>
        <location evidence="1">Cell inner membrane</location>
        <topology evidence="1">Multi-pass membrane protein</topology>
    </subcellularLocation>
</comment>
<comment type="similarity">
    <text evidence="1">Belongs to the ATPase C chain family.</text>
</comment>
<sequence>MRKFFVILMVALVVVLTASAVFAADSDPAKLNYYGYATAGALIGLGAAAGGGGAGMGQGLRGILEGSARNPGVTGKLMTLFIVGLALIESLVIYVLVFVLITFYANPFVK</sequence>
<gene>
    <name evidence="1" type="primary">atpE</name>
    <name type="ordered locus">THEYE_A1529</name>
</gene>
<evidence type="ECO:0000255" key="1">
    <source>
        <dbReference type="HAMAP-Rule" id="MF_01396"/>
    </source>
</evidence>